<accession>Q5FSP9</accession>
<sequence>MPAITLPDGSVRTFDGTVTGTTIAASIGPGLAKAAMAMEVDGKPVDIGTEISSDASVKFITRKDEDALEMIRHDAAHVLAEAVQSLWPETQVTIGPSIKDGFYYDFSREKPFTPEDFPAIEAKMREIVAANTPFVREVWDRDDAIRFFEEKGEDFKAQLIQDLPEDEQISIYRQGEWLDLCRGPHLRTTGDVGTAFKLMRVAGAYWRGDHRNPMLTRIYGTAWRDKKELDAHLLRLEEAEKRDHRRIGREMDLFHIQEEAVGQIFWHRKGWRLYTVLQDYMRRAQERNNYEEVRTPQLVDRALWEASGHWDKYRENMFIATVEDEDKTLALKPMNCPCHVQIFRHGLRSYRELPLRMAEFGACHRYEPSGALHGIMRVRGFTQDDAHIFCTDDQIADETAKFVKMLAEVYSDLGFDTFRVKFSDRPETRAGSDEVWDRAEGSLKKACEIAGVEYEYNPGEGAFYGPKLEFVLTDAIGRDWQCGTLQVDYVLPERLDASYIGEDSNRHRPVMLHRAILGSFERFIGILIEQYAGKFPLWLAPTQVVVASIVSDAADYANEVAATLKAAGLQVETDTRSDKINAKIREHSLARVPVILVVGRREAEERKVAMRRLGGAAQEILSLDDAVAALAKEAQAPDIARFAKD</sequence>
<comment type="function">
    <text evidence="1">Catalyzes the attachment of threonine to tRNA(Thr) in a two-step reaction: L-threonine is first activated by ATP to form Thr-AMP and then transferred to the acceptor end of tRNA(Thr). Also edits incorrectly charged L-seryl-tRNA(Thr).</text>
</comment>
<comment type="catalytic activity">
    <reaction evidence="1">
        <text>tRNA(Thr) + L-threonine + ATP = L-threonyl-tRNA(Thr) + AMP + diphosphate + H(+)</text>
        <dbReference type="Rhea" id="RHEA:24624"/>
        <dbReference type="Rhea" id="RHEA-COMP:9670"/>
        <dbReference type="Rhea" id="RHEA-COMP:9704"/>
        <dbReference type="ChEBI" id="CHEBI:15378"/>
        <dbReference type="ChEBI" id="CHEBI:30616"/>
        <dbReference type="ChEBI" id="CHEBI:33019"/>
        <dbReference type="ChEBI" id="CHEBI:57926"/>
        <dbReference type="ChEBI" id="CHEBI:78442"/>
        <dbReference type="ChEBI" id="CHEBI:78534"/>
        <dbReference type="ChEBI" id="CHEBI:456215"/>
        <dbReference type="EC" id="6.1.1.3"/>
    </reaction>
</comment>
<comment type="cofactor">
    <cofactor evidence="1">
        <name>Zn(2+)</name>
        <dbReference type="ChEBI" id="CHEBI:29105"/>
    </cofactor>
    <text evidence="1">Binds 1 zinc ion per subunit.</text>
</comment>
<comment type="subunit">
    <text evidence="1">Homodimer.</text>
</comment>
<comment type="subcellular location">
    <subcellularLocation>
        <location evidence="1">Cytoplasm</location>
    </subcellularLocation>
</comment>
<comment type="similarity">
    <text evidence="1">Belongs to the class-II aminoacyl-tRNA synthetase family.</text>
</comment>
<feature type="chain" id="PRO_0000100985" description="Threonine--tRNA ligase">
    <location>
        <begin position="1"/>
        <end position="645"/>
    </location>
</feature>
<feature type="domain" description="TGS" evidence="2">
    <location>
        <begin position="1"/>
        <end position="61"/>
    </location>
</feature>
<feature type="region of interest" description="Catalytic" evidence="1">
    <location>
        <begin position="243"/>
        <end position="536"/>
    </location>
</feature>
<feature type="binding site" evidence="1">
    <location>
        <position position="336"/>
    </location>
    <ligand>
        <name>Zn(2+)</name>
        <dbReference type="ChEBI" id="CHEBI:29105"/>
    </ligand>
</feature>
<feature type="binding site" evidence="1">
    <location>
        <position position="387"/>
    </location>
    <ligand>
        <name>Zn(2+)</name>
        <dbReference type="ChEBI" id="CHEBI:29105"/>
    </ligand>
</feature>
<feature type="binding site" evidence="1">
    <location>
        <position position="513"/>
    </location>
    <ligand>
        <name>Zn(2+)</name>
        <dbReference type="ChEBI" id="CHEBI:29105"/>
    </ligand>
</feature>
<reference key="1">
    <citation type="journal article" date="2005" name="Nat. Biotechnol.">
        <title>Complete genome sequence of the acetic acid bacterium Gluconobacter oxydans.</title>
        <authorList>
            <person name="Prust C."/>
            <person name="Hoffmeister M."/>
            <person name="Liesegang H."/>
            <person name="Wiezer A."/>
            <person name="Fricke W.F."/>
            <person name="Ehrenreich A."/>
            <person name="Gottschalk G."/>
            <person name="Deppenmeier U."/>
        </authorList>
    </citation>
    <scope>NUCLEOTIDE SEQUENCE [LARGE SCALE GENOMIC DNA]</scope>
    <source>
        <strain>621H</strain>
    </source>
</reference>
<keyword id="KW-0030">Aminoacyl-tRNA synthetase</keyword>
<keyword id="KW-0067">ATP-binding</keyword>
<keyword id="KW-0963">Cytoplasm</keyword>
<keyword id="KW-0436">Ligase</keyword>
<keyword id="KW-0479">Metal-binding</keyword>
<keyword id="KW-0547">Nucleotide-binding</keyword>
<keyword id="KW-0648">Protein biosynthesis</keyword>
<keyword id="KW-1185">Reference proteome</keyword>
<keyword id="KW-0694">RNA-binding</keyword>
<keyword id="KW-0820">tRNA-binding</keyword>
<keyword id="KW-0862">Zinc</keyword>
<dbReference type="EC" id="6.1.1.3" evidence="1"/>
<dbReference type="EMBL" id="CP000009">
    <property type="protein sequence ID" value="AAW60597.1"/>
    <property type="molecule type" value="Genomic_DNA"/>
</dbReference>
<dbReference type="RefSeq" id="WP_011252393.1">
    <property type="nucleotide sequence ID" value="NC_006677.1"/>
</dbReference>
<dbReference type="SMR" id="Q5FSP9"/>
<dbReference type="STRING" id="290633.GOX0823"/>
<dbReference type="KEGG" id="gox:GOX0823"/>
<dbReference type="eggNOG" id="COG0441">
    <property type="taxonomic scope" value="Bacteria"/>
</dbReference>
<dbReference type="HOGENOM" id="CLU_008554_0_1_5"/>
<dbReference type="Proteomes" id="UP000006375">
    <property type="component" value="Chromosome"/>
</dbReference>
<dbReference type="GO" id="GO:0005737">
    <property type="term" value="C:cytoplasm"/>
    <property type="evidence" value="ECO:0007669"/>
    <property type="project" value="UniProtKB-SubCell"/>
</dbReference>
<dbReference type="GO" id="GO:0005524">
    <property type="term" value="F:ATP binding"/>
    <property type="evidence" value="ECO:0007669"/>
    <property type="project" value="UniProtKB-UniRule"/>
</dbReference>
<dbReference type="GO" id="GO:0046872">
    <property type="term" value="F:metal ion binding"/>
    <property type="evidence" value="ECO:0007669"/>
    <property type="project" value="UniProtKB-KW"/>
</dbReference>
<dbReference type="GO" id="GO:0004829">
    <property type="term" value="F:threonine-tRNA ligase activity"/>
    <property type="evidence" value="ECO:0007669"/>
    <property type="project" value="UniProtKB-UniRule"/>
</dbReference>
<dbReference type="GO" id="GO:0000049">
    <property type="term" value="F:tRNA binding"/>
    <property type="evidence" value="ECO:0007669"/>
    <property type="project" value="UniProtKB-KW"/>
</dbReference>
<dbReference type="GO" id="GO:0006435">
    <property type="term" value="P:threonyl-tRNA aminoacylation"/>
    <property type="evidence" value="ECO:0007669"/>
    <property type="project" value="UniProtKB-UniRule"/>
</dbReference>
<dbReference type="CDD" id="cd01667">
    <property type="entry name" value="TGS_ThrRS"/>
    <property type="match status" value="1"/>
</dbReference>
<dbReference type="CDD" id="cd00860">
    <property type="entry name" value="ThrRS_anticodon"/>
    <property type="match status" value="1"/>
</dbReference>
<dbReference type="CDD" id="cd00771">
    <property type="entry name" value="ThrRS_core"/>
    <property type="match status" value="1"/>
</dbReference>
<dbReference type="FunFam" id="3.10.20.30:FF:000005">
    <property type="entry name" value="Threonine--tRNA ligase"/>
    <property type="match status" value="1"/>
</dbReference>
<dbReference type="FunFam" id="3.30.54.20:FF:000002">
    <property type="entry name" value="Threonine--tRNA ligase"/>
    <property type="match status" value="1"/>
</dbReference>
<dbReference type="FunFam" id="3.30.930.10:FF:000002">
    <property type="entry name" value="Threonine--tRNA ligase"/>
    <property type="match status" value="1"/>
</dbReference>
<dbReference type="FunFam" id="3.40.50.800:FF:000001">
    <property type="entry name" value="Threonine--tRNA ligase"/>
    <property type="match status" value="1"/>
</dbReference>
<dbReference type="FunFam" id="3.30.980.10:FF:000005">
    <property type="entry name" value="Threonyl-tRNA synthetase, mitochondrial"/>
    <property type="match status" value="1"/>
</dbReference>
<dbReference type="Gene3D" id="3.10.20.30">
    <property type="match status" value="1"/>
</dbReference>
<dbReference type="Gene3D" id="3.30.54.20">
    <property type="match status" value="1"/>
</dbReference>
<dbReference type="Gene3D" id="3.40.50.800">
    <property type="entry name" value="Anticodon-binding domain"/>
    <property type="match status" value="1"/>
</dbReference>
<dbReference type="Gene3D" id="3.30.930.10">
    <property type="entry name" value="Bira Bifunctional Protein, Domain 2"/>
    <property type="match status" value="1"/>
</dbReference>
<dbReference type="Gene3D" id="3.30.980.10">
    <property type="entry name" value="Threonyl-trna Synthetase, Chain A, domain 2"/>
    <property type="match status" value="1"/>
</dbReference>
<dbReference type="HAMAP" id="MF_00184">
    <property type="entry name" value="Thr_tRNA_synth"/>
    <property type="match status" value="1"/>
</dbReference>
<dbReference type="InterPro" id="IPR002314">
    <property type="entry name" value="aa-tRNA-synt_IIb"/>
</dbReference>
<dbReference type="InterPro" id="IPR006195">
    <property type="entry name" value="aa-tRNA-synth_II"/>
</dbReference>
<dbReference type="InterPro" id="IPR045864">
    <property type="entry name" value="aa-tRNA-synth_II/BPL/LPL"/>
</dbReference>
<dbReference type="InterPro" id="IPR004154">
    <property type="entry name" value="Anticodon-bd"/>
</dbReference>
<dbReference type="InterPro" id="IPR036621">
    <property type="entry name" value="Anticodon-bd_dom_sf"/>
</dbReference>
<dbReference type="InterPro" id="IPR012675">
    <property type="entry name" value="Beta-grasp_dom_sf"/>
</dbReference>
<dbReference type="InterPro" id="IPR004095">
    <property type="entry name" value="TGS"/>
</dbReference>
<dbReference type="InterPro" id="IPR012676">
    <property type="entry name" value="TGS-like"/>
</dbReference>
<dbReference type="InterPro" id="IPR002320">
    <property type="entry name" value="Thr-tRNA-ligase_IIa"/>
</dbReference>
<dbReference type="InterPro" id="IPR018163">
    <property type="entry name" value="Thr/Ala-tRNA-synth_IIc_edit"/>
</dbReference>
<dbReference type="InterPro" id="IPR047246">
    <property type="entry name" value="ThrRS_anticodon"/>
</dbReference>
<dbReference type="InterPro" id="IPR033728">
    <property type="entry name" value="ThrRS_core"/>
</dbReference>
<dbReference type="InterPro" id="IPR012947">
    <property type="entry name" value="tRNA_SAD"/>
</dbReference>
<dbReference type="NCBIfam" id="TIGR00418">
    <property type="entry name" value="thrS"/>
    <property type="match status" value="1"/>
</dbReference>
<dbReference type="PANTHER" id="PTHR11451:SF44">
    <property type="entry name" value="THREONINE--TRNA LIGASE, CHLOROPLASTIC_MITOCHONDRIAL 2"/>
    <property type="match status" value="1"/>
</dbReference>
<dbReference type="PANTHER" id="PTHR11451">
    <property type="entry name" value="THREONINE-TRNA LIGASE"/>
    <property type="match status" value="1"/>
</dbReference>
<dbReference type="Pfam" id="PF03129">
    <property type="entry name" value="HGTP_anticodon"/>
    <property type="match status" value="1"/>
</dbReference>
<dbReference type="Pfam" id="PF02824">
    <property type="entry name" value="TGS"/>
    <property type="match status" value="1"/>
</dbReference>
<dbReference type="Pfam" id="PF00587">
    <property type="entry name" value="tRNA-synt_2b"/>
    <property type="match status" value="1"/>
</dbReference>
<dbReference type="Pfam" id="PF07973">
    <property type="entry name" value="tRNA_SAD"/>
    <property type="match status" value="1"/>
</dbReference>
<dbReference type="PRINTS" id="PR01047">
    <property type="entry name" value="TRNASYNTHTHR"/>
</dbReference>
<dbReference type="SMART" id="SM00863">
    <property type="entry name" value="tRNA_SAD"/>
    <property type="match status" value="1"/>
</dbReference>
<dbReference type="SUPFAM" id="SSF52954">
    <property type="entry name" value="Class II aaRS ABD-related"/>
    <property type="match status" value="1"/>
</dbReference>
<dbReference type="SUPFAM" id="SSF55681">
    <property type="entry name" value="Class II aaRS and biotin synthetases"/>
    <property type="match status" value="1"/>
</dbReference>
<dbReference type="SUPFAM" id="SSF81271">
    <property type="entry name" value="TGS-like"/>
    <property type="match status" value="1"/>
</dbReference>
<dbReference type="SUPFAM" id="SSF55186">
    <property type="entry name" value="ThrRS/AlaRS common domain"/>
    <property type="match status" value="1"/>
</dbReference>
<dbReference type="PROSITE" id="PS50862">
    <property type="entry name" value="AA_TRNA_LIGASE_II"/>
    <property type="match status" value="1"/>
</dbReference>
<dbReference type="PROSITE" id="PS51880">
    <property type="entry name" value="TGS"/>
    <property type="match status" value="1"/>
</dbReference>
<gene>
    <name evidence="1" type="primary">thrS</name>
    <name type="ordered locus">GOX0823</name>
</gene>
<organism>
    <name type="scientific">Gluconobacter oxydans (strain 621H)</name>
    <name type="common">Gluconobacter suboxydans</name>
    <dbReference type="NCBI Taxonomy" id="290633"/>
    <lineage>
        <taxon>Bacteria</taxon>
        <taxon>Pseudomonadati</taxon>
        <taxon>Pseudomonadota</taxon>
        <taxon>Alphaproteobacteria</taxon>
        <taxon>Acetobacterales</taxon>
        <taxon>Acetobacteraceae</taxon>
        <taxon>Gluconobacter</taxon>
    </lineage>
</organism>
<proteinExistence type="inferred from homology"/>
<evidence type="ECO:0000255" key="1">
    <source>
        <dbReference type="HAMAP-Rule" id="MF_00184"/>
    </source>
</evidence>
<evidence type="ECO:0000255" key="2">
    <source>
        <dbReference type="PROSITE-ProRule" id="PRU01228"/>
    </source>
</evidence>
<name>SYT_GLUOX</name>
<protein>
    <recommendedName>
        <fullName evidence="1">Threonine--tRNA ligase</fullName>
        <ecNumber evidence="1">6.1.1.3</ecNumber>
    </recommendedName>
    <alternativeName>
        <fullName evidence="1">Threonyl-tRNA synthetase</fullName>
        <shortName evidence="1">ThrRS</shortName>
    </alternativeName>
</protein>